<proteinExistence type="inferred from homology"/>
<name>CO7_MOUSE</name>
<gene>
    <name evidence="8" type="primary">C7</name>
</gene>
<comment type="function">
    <text evidence="1">Component of the membrane attack complex (MAC), a multiprotein complex activated by the complement cascade, which inserts into a target cell membrane and forms a pore, leading to target cell membrane rupture and cell lysis. The MAC is initiated by proteolytic cleavage of C5 into complement C5b in response to the classical, alternative, lectin and GZMK complement pathways. The complement pathways consist in a cascade of proteins that leads to phagocytosis and breakdown of pathogens and signaling that strengthens the adaptive immune system. C7 serves as a membrane anchor. During MAC assembly, associates with C5b and C6 to form the C5b-7 complex, a key lipophilic precursor of the MAC complex, which associates with the outer leaflet and reduces the energy for membrane bending.</text>
</comment>
<comment type="activity regulation">
    <text evidence="1">Membrane attack complex (MAC) assembly is inhibited by CD59, thereby protecting self-cells from damage during complement activation. MAC assembly is also inhibited by clusterin (CLU) chaperones that inhibit polymerization of C9.</text>
</comment>
<comment type="subunit">
    <text evidence="1">Monomer or dimer; as a C5b-7 complex it can also form multimeric rosettes. Component of the membrane attack complex (MAC), composed of complement C5b, C6, C7, C8A, C8B, C8G and multiple copies of the pore-forming subunit C9.</text>
</comment>
<comment type="subcellular location">
    <subcellularLocation>
        <location evidence="1">Secreted</location>
    </subcellularLocation>
    <subcellularLocation>
        <location evidence="1">Target cell membrane</location>
    </subcellularLocation>
    <text evidence="1">Secreted as soluble protein. Inserts into the cell membrane of target cells.</text>
</comment>
<comment type="PTM">
    <text evidence="1">C-, N- and O-glycosylated. O-glycosylated with core 1 or possibly core 8 glycans.</text>
</comment>
<comment type="similarity">
    <text evidence="7">Belongs to the complement C6/C7/C8/C9 family.</text>
</comment>
<keyword id="KW-0180">Complement pathway</keyword>
<keyword id="KW-0204">Cytolysis</keyword>
<keyword id="KW-1015">Disulfide bond</keyword>
<keyword id="KW-0245">EGF-like domain</keyword>
<keyword id="KW-0325">Glycoprotein</keyword>
<keyword id="KW-0391">Immunity</keyword>
<keyword id="KW-0399">Innate immunity</keyword>
<keyword id="KW-0472">Membrane</keyword>
<keyword id="KW-0473">Membrane attack complex</keyword>
<keyword id="KW-1185">Reference proteome</keyword>
<keyword id="KW-0677">Repeat</keyword>
<keyword id="KW-0964">Secreted</keyword>
<keyword id="KW-0732">Signal</keyword>
<keyword id="KW-0768">Sushi</keyword>
<keyword id="KW-1052">Target cell membrane</keyword>
<keyword id="KW-1053">Target membrane</keyword>
<feature type="signal peptide" evidence="2">
    <location>
        <begin position="1"/>
        <end position="22"/>
    </location>
</feature>
<feature type="chain" id="PRO_5003052732" description="Complement component C7" evidence="2">
    <location>
        <begin position="23"/>
        <end position="845"/>
    </location>
</feature>
<feature type="domain" description="TSP type-1 1" evidence="4">
    <location>
        <begin position="27"/>
        <end position="80"/>
    </location>
</feature>
<feature type="domain" description="LDL-receptor class A" evidence="3">
    <location>
        <begin position="84"/>
        <end position="120"/>
    </location>
</feature>
<feature type="domain" description="MACPF" evidence="6">
    <location>
        <begin position="122"/>
        <end position="456"/>
    </location>
</feature>
<feature type="domain" description="EGF-like" evidence="2">
    <location>
        <begin position="457"/>
        <end position="487"/>
    </location>
</feature>
<feature type="domain" description="TSP type-1 2" evidence="4">
    <location>
        <begin position="500"/>
        <end position="549"/>
    </location>
</feature>
<feature type="domain" description="Sushi 1" evidence="5">
    <location>
        <begin position="569"/>
        <end position="628"/>
    </location>
</feature>
<feature type="domain" description="Sushi 2" evidence="5">
    <location>
        <begin position="629"/>
        <end position="690"/>
    </location>
</feature>
<feature type="region of interest" description="CCP 1">
    <location>
        <begin position="545"/>
        <end position="615"/>
    </location>
</feature>
<feature type="region of interest" description="CCP 2">
    <location>
        <begin position="616"/>
        <end position="693"/>
    </location>
</feature>
<feature type="region of interest" description="Factor I module (FIM) 1">
    <location>
        <begin position="695"/>
        <end position="771"/>
    </location>
</feature>
<feature type="region of interest" description="Factor I module (FIM) 2">
    <location>
        <begin position="772"/>
        <end position="844"/>
    </location>
</feature>
<feature type="glycosylation site" description="N-linked (GlcNAc...) asparagine" evidence="2">
    <location>
        <position position="124"/>
    </location>
</feature>
<feature type="glycosylation site" description="N-linked (GlcNAc...) asparagine" evidence="2">
    <location>
        <position position="201"/>
    </location>
</feature>
<feature type="glycosylation site" description="N-linked (GlcNAc...) asparagine" evidence="2">
    <location>
        <position position="755"/>
    </location>
</feature>
<feature type="disulfide bond" evidence="1">
    <location>
        <begin position="28"/>
        <end position="63"/>
    </location>
</feature>
<feature type="disulfide bond" evidence="1">
    <location>
        <begin position="39"/>
        <end position="73"/>
    </location>
</feature>
<feature type="disulfide bond" evidence="1">
    <location>
        <begin position="42"/>
        <end position="79"/>
    </location>
</feature>
<feature type="disulfide bond" evidence="3">
    <location>
        <begin position="85"/>
        <end position="96"/>
    </location>
</feature>
<feature type="disulfide bond" evidence="3">
    <location>
        <begin position="91"/>
        <end position="109"/>
    </location>
</feature>
<feature type="disulfide bond" evidence="3">
    <location>
        <begin position="103"/>
        <end position="119"/>
    </location>
</feature>
<feature type="disulfide bond" evidence="1">
    <location>
        <begin position="127"/>
        <end position="164"/>
    </location>
</feature>
<feature type="disulfide bond" evidence="1">
    <location>
        <begin position="336"/>
        <end position="353"/>
    </location>
</feature>
<feature type="disulfide bond" evidence="1">
    <location>
        <begin position="433"/>
        <end position="560"/>
    </location>
</feature>
<feature type="disulfide bond" evidence="1">
    <location>
        <begin position="455"/>
        <end position="505"/>
    </location>
</feature>
<feature type="disulfide bond" evidence="1">
    <location>
        <begin position="457"/>
        <end position="473"/>
    </location>
</feature>
<feature type="disulfide bond" evidence="1">
    <location>
        <begin position="460"/>
        <end position="475"/>
    </location>
</feature>
<feature type="disulfide bond" evidence="1">
    <location>
        <begin position="477"/>
        <end position="486"/>
    </location>
</feature>
<feature type="disulfide bond" evidence="1">
    <location>
        <begin position="512"/>
        <end position="545"/>
    </location>
</feature>
<feature type="disulfide bond" evidence="1">
    <location>
        <begin position="523"/>
        <end position="535"/>
    </location>
</feature>
<feature type="disulfide bond" evidence="5">
    <location>
        <begin position="571"/>
        <end position="613"/>
    </location>
</feature>
<feature type="disulfide bond" evidence="5">
    <location>
        <begin position="599"/>
        <end position="626"/>
    </location>
</feature>
<feature type="disulfide bond" evidence="5">
    <location>
        <begin position="631"/>
        <end position="673"/>
    </location>
</feature>
<feature type="disulfide bond" evidence="5">
    <location>
        <begin position="659"/>
        <end position="688"/>
    </location>
</feature>
<feature type="disulfide bond" evidence="1">
    <location>
        <begin position="703"/>
        <end position="714"/>
    </location>
</feature>
<feature type="disulfide bond" evidence="1">
    <location>
        <begin position="716"/>
        <end position="751"/>
    </location>
</feature>
<feature type="disulfide bond" evidence="1">
    <location>
        <begin position="722"/>
        <end position="744"/>
    </location>
</feature>
<feature type="disulfide bond" evidence="1">
    <location>
        <begin position="729"/>
        <end position="764"/>
    </location>
</feature>
<feature type="disulfide bond" evidence="1">
    <location>
        <begin position="774"/>
        <end position="783"/>
    </location>
</feature>
<feature type="disulfide bond" evidence="1">
    <location>
        <begin position="777"/>
        <end position="790"/>
    </location>
</feature>
<feature type="disulfide bond" evidence="1">
    <location>
        <begin position="792"/>
        <end position="826"/>
    </location>
</feature>
<feature type="disulfide bond" evidence="1">
    <location>
        <begin position="798"/>
        <end position="819"/>
    </location>
</feature>
<feature type="disulfide bond" evidence="1">
    <location>
        <begin position="806"/>
        <end position="839"/>
    </location>
</feature>
<evidence type="ECO:0000250" key="1">
    <source>
        <dbReference type="UniProtKB" id="P10643"/>
    </source>
</evidence>
<evidence type="ECO:0000255" key="2"/>
<evidence type="ECO:0000255" key="3">
    <source>
        <dbReference type="PROSITE-ProRule" id="PRU00124"/>
    </source>
</evidence>
<evidence type="ECO:0000255" key="4">
    <source>
        <dbReference type="PROSITE-ProRule" id="PRU00210"/>
    </source>
</evidence>
<evidence type="ECO:0000255" key="5">
    <source>
        <dbReference type="PROSITE-ProRule" id="PRU00302"/>
    </source>
</evidence>
<evidence type="ECO:0000255" key="6">
    <source>
        <dbReference type="PROSITE-ProRule" id="PRU00745"/>
    </source>
</evidence>
<evidence type="ECO:0000305" key="7"/>
<evidence type="ECO:0000312" key="8">
    <source>
        <dbReference type="MGI" id="MGI:88235"/>
    </source>
</evidence>
<protein>
    <recommendedName>
        <fullName evidence="7">Complement component C7</fullName>
    </recommendedName>
</protein>
<sequence length="845" mass="93337">MQVTSLLILVCFIAAFQVFSRASSPVNCKWDSYGPWSECNGCTKTQTRRRSVAVYGQYGGYPCEGSAFETQSCKPERGCPTEEGCGDRFRCFSGQCISKSLVCNGDPDCEEDGADEDKCENVANPSCNIDKPPPNIELTGYGYNVVTGQGKKRVINTKSFGGQCRKVFSGDGKDFYRLSGNILSYTFQVKVDNDFNYEFYNSSWSYIKHTSTEQNTFYSWKGLFSHSRNTYGHGSAKEEIDTKMKSYKLLVVQNTVEVAQFTNNNPEFLQVAEPFWKELSHLPTLYDYSAYRRLIDQYGTHYLQSGSLGGEYRVLFYVDSGSAKETGFQSDQDNACSSADFQFLFTSSADQRCMKQLETEKSTSGNKGRLLRGKPLVRGGDSGFVADLSFLDLDNPAGNKQRYSSWAGSVTRLPQVIKEKLAPLYELVKEVPCASVKRLYLKRAIEEYFDEFDPCHCRPCQNGGLAIVVETQCQCLCKPYTFGSACEQGVLVGDQAGGVDGGWNCWSSWSPCVQGKRTRSRECNNPPPRDDGKSCLGETTESKQCEDQDLEKLRLLEPHCFHSSLAPKEFCLSPPALKDGFVQGEGTMVPVGQSVVYACDEGYSLIGDPVARCGEDLQWLVGEMHCQKLACVLPGEMNGMQSHPQKPFYMVGEKVTLSCVGGMSLEGPSTLLCGSSLKWSPELKDAKCVQKATSTPPPAAPACQPWEKLQNSKCICKMPYECGSSLDVCARDESRNKILSLTICKMHVVHCHKRNYTLVGKESCTLPSPAEKVCGACPIWSKCDAQNGKCICREASECQTAGYRICVEVNGKEETMSECEAGILRCRGQSISITAIKPCAEEAAQ</sequence>
<dbReference type="RefSeq" id="NP_001230766.1">
    <property type="nucleotide sequence ID" value="NM_001243837.2"/>
</dbReference>
<dbReference type="SMR" id="D3YXF5"/>
<dbReference type="ComplexPortal" id="CPX-6202">
    <property type="entry name" value="Membrane attack complex"/>
</dbReference>
<dbReference type="FunCoup" id="D3YXF5">
    <property type="interactions" value="55"/>
</dbReference>
<dbReference type="STRING" id="10090.ENSMUSP00000106317"/>
<dbReference type="iPTMnet" id="D3YXF5"/>
<dbReference type="PhosphoSitePlus" id="D3YXF5"/>
<dbReference type="jPOST" id="D3YXF5"/>
<dbReference type="PaxDb" id="10090-ENSMUSP00000106317"/>
<dbReference type="PeptideAtlas" id="D3YXF5"/>
<dbReference type="ProteomicsDB" id="326417"/>
<dbReference type="Antibodypedia" id="709">
    <property type="antibodies" value="327 antibodies from 36 providers"/>
</dbReference>
<dbReference type="DNASU" id="109828"/>
<dbReference type="Ensembl" id="ENSMUST00000110689.5">
    <property type="protein sequence ID" value="ENSMUSP00000106317.4"/>
    <property type="gene ID" value="ENSMUSG00000079105.5"/>
</dbReference>
<dbReference type="GeneID" id="109828"/>
<dbReference type="KEGG" id="mmu:109828"/>
<dbReference type="UCSC" id="uc011zqy.2">
    <property type="organism name" value="mouse"/>
</dbReference>
<dbReference type="AGR" id="MGI:88235"/>
<dbReference type="CTD" id="730"/>
<dbReference type="MGI" id="MGI:88235">
    <property type="gene designation" value="C7"/>
</dbReference>
<dbReference type="VEuPathDB" id="HostDB:ENSMUSG00000079105"/>
<dbReference type="eggNOG" id="ENOG502QU3G">
    <property type="taxonomic scope" value="Eukaryota"/>
</dbReference>
<dbReference type="GeneTree" id="ENSGT00940000156804"/>
<dbReference type="HOGENOM" id="CLU_014082_0_0_1"/>
<dbReference type="InParanoid" id="D3YXF5"/>
<dbReference type="OMA" id="CQNGGQP"/>
<dbReference type="OrthoDB" id="504708at2759"/>
<dbReference type="PhylomeDB" id="D3YXF5"/>
<dbReference type="TreeFam" id="TF330498"/>
<dbReference type="Reactome" id="R-MMU-166665">
    <property type="pathway name" value="Terminal pathway of complement"/>
</dbReference>
<dbReference type="Reactome" id="R-MMU-977606">
    <property type="pathway name" value="Regulation of Complement cascade"/>
</dbReference>
<dbReference type="BioGRID-ORCS" id="109828">
    <property type="hits" value="3 hits in 78 CRISPR screens"/>
</dbReference>
<dbReference type="ChiTaRS" id="Oxr1">
    <property type="organism name" value="mouse"/>
</dbReference>
<dbReference type="Proteomes" id="UP000000589">
    <property type="component" value="Chromosome 15"/>
</dbReference>
<dbReference type="RNAct" id="D3YXF5">
    <property type="molecule type" value="protein"/>
</dbReference>
<dbReference type="Bgee" id="ENSMUSG00000079105">
    <property type="expression patterns" value="Expressed in zone of skin and 32 other cell types or tissues"/>
</dbReference>
<dbReference type="GO" id="GO:0005576">
    <property type="term" value="C:extracellular region"/>
    <property type="evidence" value="ECO:0007669"/>
    <property type="project" value="UniProtKB-SubCell"/>
</dbReference>
<dbReference type="GO" id="GO:0005579">
    <property type="term" value="C:membrane attack complex"/>
    <property type="evidence" value="ECO:0000266"/>
    <property type="project" value="ComplexPortal"/>
</dbReference>
<dbReference type="GO" id="GO:0005886">
    <property type="term" value="C:plasma membrane"/>
    <property type="evidence" value="ECO:0000303"/>
    <property type="project" value="ComplexPortal"/>
</dbReference>
<dbReference type="GO" id="GO:0006958">
    <property type="term" value="P:complement activation, classical pathway"/>
    <property type="evidence" value="ECO:0007669"/>
    <property type="project" value="UniProtKB-KW"/>
</dbReference>
<dbReference type="GO" id="GO:0045087">
    <property type="term" value="P:innate immune response"/>
    <property type="evidence" value="ECO:0007669"/>
    <property type="project" value="UniProtKB-KW"/>
</dbReference>
<dbReference type="GO" id="GO:0031640">
    <property type="term" value="P:killing of cells of another organism"/>
    <property type="evidence" value="ECO:0007669"/>
    <property type="project" value="UniProtKB-KW"/>
</dbReference>
<dbReference type="GO" id="GO:0050778">
    <property type="term" value="P:positive regulation of immune response"/>
    <property type="evidence" value="ECO:0000303"/>
    <property type="project" value="ComplexPortal"/>
</dbReference>
<dbReference type="CDD" id="cd00033">
    <property type="entry name" value="CCP"/>
    <property type="match status" value="2"/>
</dbReference>
<dbReference type="CDD" id="cd00112">
    <property type="entry name" value="LDLa"/>
    <property type="match status" value="1"/>
</dbReference>
<dbReference type="FunFam" id="4.10.400.10:FF:000099">
    <property type="entry name" value="Complement component C7"/>
    <property type="match status" value="1"/>
</dbReference>
<dbReference type="FunFam" id="2.20.100.10:FF:000001">
    <property type="entry name" value="semaphorin-5A isoform X1"/>
    <property type="match status" value="1"/>
</dbReference>
<dbReference type="Gene3D" id="3.30.60.30">
    <property type="match status" value="2"/>
</dbReference>
<dbReference type="Gene3D" id="2.10.70.10">
    <property type="entry name" value="Complement Module, domain 1"/>
    <property type="match status" value="2"/>
</dbReference>
<dbReference type="Gene3D" id="4.10.400.10">
    <property type="entry name" value="Low-density Lipoprotein Receptor"/>
    <property type="match status" value="1"/>
</dbReference>
<dbReference type="Gene3D" id="2.20.100.10">
    <property type="entry name" value="Thrombospondin type-1 (TSP1) repeat"/>
    <property type="match status" value="2"/>
</dbReference>
<dbReference type="InterPro" id="IPR048827">
    <property type="entry name" value="C7_FIM2_N"/>
</dbReference>
<dbReference type="InterPro" id="IPR048825">
    <property type="entry name" value="C7_KAZAL"/>
</dbReference>
<dbReference type="InterPro" id="IPR003884">
    <property type="entry name" value="FacI_MAC"/>
</dbReference>
<dbReference type="InterPro" id="IPR040729">
    <property type="entry name" value="Kazal_3"/>
</dbReference>
<dbReference type="InterPro" id="IPR036055">
    <property type="entry name" value="LDL_receptor-like_sf"/>
</dbReference>
<dbReference type="InterPro" id="IPR023415">
    <property type="entry name" value="LDLR_class-A_CS"/>
</dbReference>
<dbReference type="InterPro" id="IPR002172">
    <property type="entry name" value="LDrepeatLR_classA_rpt"/>
</dbReference>
<dbReference type="InterPro" id="IPR001862">
    <property type="entry name" value="MAC_perforin"/>
</dbReference>
<dbReference type="InterPro" id="IPR020864">
    <property type="entry name" value="MACPF"/>
</dbReference>
<dbReference type="InterPro" id="IPR020863">
    <property type="entry name" value="MACPF_CS"/>
</dbReference>
<dbReference type="InterPro" id="IPR035976">
    <property type="entry name" value="Sushi/SCR/CCP_sf"/>
</dbReference>
<dbReference type="InterPro" id="IPR000436">
    <property type="entry name" value="Sushi_SCR_CCP_dom"/>
</dbReference>
<dbReference type="InterPro" id="IPR000884">
    <property type="entry name" value="TSP1_rpt"/>
</dbReference>
<dbReference type="InterPro" id="IPR036383">
    <property type="entry name" value="TSP1_rpt_sf"/>
</dbReference>
<dbReference type="PANTHER" id="PTHR45742">
    <property type="entry name" value="COMPLEMENT COMPONENT C6"/>
    <property type="match status" value="1"/>
</dbReference>
<dbReference type="PANTHER" id="PTHR45742:SF2">
    <property type="entry name" value="COMPLEMENT COMPONENT C7"/>
    <property type="match status" value="1"/>
</dbReference>
<dbReference type="Pfam" id="PF21284">
    <property type="entry name" value="C7_FIM2_N"/>
    <property type="match status" value="1"/>
</dbReference>
<dbReference type="Pfam" id="PF18434">
    <property type="entry name" value="Kazal_3"/>
    <property type="match status" value="1"/>
</dbReference>
<dbReference type="Pfam" id="PF21330">
    <property type="entry name" value="Kazal_C7"/>
    <property type="match status" value="1"/>
</dbReference>
<dbReference type="Pfam" id="PF00057">
    <property type="entry name" value="Ldl_recept_a"/>
    <property type="match status" value="1"/>
</dbReference>
<dbReference type="Pfam" id="PF01823">
    <property type="entry name" value="MACPF"/>
    <property type="match status" value="1"/>
</dbReference>
<dbReference type="Pfam" id="PF00084">
    <property type="entry name" value="Sushi"/>
    <property type="match status" value="2"/>
</dbReference>
<dbReference type="Pfam" id="PF00090">
    <property type="entry name" value="TSP_1"/>
    <property type="match status" value="2"/>
</dbReference>
<dbReference type="PRINTS" id="PR00764">
    <property type="entry name" value="COMPLEMENTC9"/>
</dbReference>
<dbReference type="PRINTS" id="PR01705">
    <property type="entry name" value="TSP1REPEAT"/>
</dbReference>
<dbReference type="SMART" id="SM00032">
    <property type="entry name" value="CCP"/>
    <property type="match status" value="2"/>
</dbReference>
<dbReference type="SMART" id="SM00057">
    <property type="entry name" value="FIMAC"/>
    <property type="match status" value="2"/>
</dbReference>
<dbReference type="SMART" id="SM00192">
    <property type="entry name" value="LDLa"/>
    <property type="match status" value="1"/>
</dbReference>
<dbReference type="SMART" id="SM00457">
    <property type="entry name" value="MACPF"/>
    <property type="match status" value="1"/>
</dbReference>
<dbReference type="SMART" id="SM00209">
    <property type="entry name" value="TSP1"/>
    <property type="match status" value="2"/>
</dbReference>
<dbReference type="SUPFAM" id="SSF57535">
    <property type="entry name" value="Complement control module/SCR domain"/>
    <property type="match status" value="2"/>
</dbReference>
<dbReference type="SUPFAM" id="SSF57424">
    <property type="entry name" value="LDL receptor-like module"/>
    <property type="match status" value="1"/>
</dbReference>
<dbReference type="SUPFAM" id="SSF82895">
    <property type="entry name" value="TSP-1 type 1 repeat"/>
    <property type="match status" value="2"/>
</dbReference>
<dbReference type="PROSITE" id="PS00022">
    <property type="entry name" value="EGF_1"/>
    <property type="match status" value="1"/>
</dbReference>
<dbReference type="PROSITE" id="PS01186">
    <property type="entry name" value="EGF_2"/>
    <property type="match status" value="1"/>
</dbReference>
<dbReference type="PROSITE" id="PS01209">
    <property type="entry name" value="LDLRA_1"/>
    <property type="match status" value="1"/>
</dbReference>
<dbReference type="PROSITE" id="PS50068">
    <property type="entry name" value="LDLRA_2"/>
    <property type="match status" value="1"/>
</dbReference>
<dbReference type="PROSITE" id="PS00279">
    <property type="entry name" value="MACPF_1"/>
    <property type="match status" value="1"/>
</dbReference>
<dbReference type="PROSITE" id="PS51412">
    <property type="entry name" value="MACPF_2"/>
    <property type="match status" value="1"/>
</dbReference>
<dbReference type="PROSITE" id="PS50923">
    <property type="entry name" value="SUSHI"/>
    <property type="match status" value="2"/>
</dbReference>
<dbReference type="PROSITE" id="PS50092">
    <property type="entry name" value="TSP1"/>
    <property type="match status" value="2"/>
</dbReference>
<accession>D3YXF5</accession>
<reference key="1">
    <citation type="journal article" date="2009" name="PLoS Biol.">
        <title>Lineage-specific biology revealed by a finished genome assembly of the mouse.</title>
        <authorList>
            <person name="Church D.M."/>
            <person name="Goodstadt L."/>
            <person name="Hillier L.W."/>
            <person name="Zody M.C."/>
            <person name="Goldstein S."/>
            <person name="She X."/>
            <person name="Bult C.J."/>
            <person name="Agarwala R."/>
            <person name="Cherry J.L."/>
            <person name="DiCuccio M."/>
            <person name="Hlavina W."/>
            <person name="Kapustin Y."/>
            <person name="Meric P."/>
            <person name="Maglott D."/>
            <person name="Birtle Z."/>
            <person name="Marques A.C."/>
            <person name="Graves T."/>
            <person name="Zhou S."/>
            <person name="Teague B."/>
            <person name="Potamousis K."/>
            <person name="Churas C."/>
            <person name="Place M."/>
            <person name="Herschleb J."/>
            <person name="Runnheim R."/>
            <person name="Forrest D."/>
            <person name="Amos-Landgraf J."/>
            <person name="Schwartz D.C."/>
            <person name="Cheng Z."/>
            <person name="Lindblad-Toh K."/>
            <person name="Eichler E.E."/>
            <person name="Ponting C.P."/>
        </authorList>
    </citation>
    <scope>NUCLEOTIDE SEQUENCE [LARGE SCALE GENOMIC DNA]</scope>
    <source>
        <strain>C57BL/6J</strain>
    </source>
</reference>
<organism>
    <name type="scientific">Mus musculus</name>
    <name type="common">Mouse</name>
    <dbReference type="NCBI Taxonomy" id="10090"/>
    <lineage>
        <taxon>Eukaryota</taxon>
        <taxon>Metazoa</taxon>
        <taxon>Chordata</taxon>
        <taxon>Craniata</taxon>
        <taxon>Vertebrata</taxon>
        <taxon>Euteleostomi</taxon>
        <taxon>Mammalia</taxon>
        <taxon>Eutheria</taxon>
        <taxon>Euarchontoglires</taxon>
        <taxon>Glires</taxon>
        <taxon>Rodentia</taxon>
        <taxon>Myomorpha</taxon>
        <taxon>Muroidea</taxon>
        <taxon>Muridae</taxon>
        <taxon>Murinae</taxon>
        <taxon>Mus</taxon>
        <taxon>Mus</taxon>
    </lineage>
</organism>